<gene>
    <name type="primary">SDHD</name>
    <name type="ORF">RCJMB04_23p7</name>
</gene>
<dbReference type="EMBL" id="AJ720714">
    <property type="protein sequence ID" value="CAG32373.1"/>
    <property type="molecule type" value="mRNA"/>
</dbReference>
<dbReference type="RefSeq" id="NP_001006321.1">
    <property type="nucleotide sequence ID" value="NM_001006321.2"/>
</dbReference>
<dbReference type="PDB" id="1YQ3">
    <property type="method" value="X-ray"/>
    <property type="resolution" value="2.20 A"/>
    <property type="chains" value="D=55-157"/>
</dbReference>
<dbReference type="PDB" id="1YQ4">
    <property type="method" value="X-ray"/>
    <property type="resolution" value="2.33 A"/>
    <property type="chains" value="D=55-157"/>
</dbReference>
<dbReference type="PDB" id="2FBW">
    <property type="method" value="X-ray"/>
    <property type="resolution" value="2.10 A"/>
    <property type="chains" value="D/Q=55-157"/>
</dbReference>
<dbReference type="PDB" id="2H88">
    <property type="method" value="X-ray"/>
    <property type="resolution" value="1.74 A"/>
    <property type="chains" value="D/Q=55-157"/>
</dbReference>
<dbReference type="PDB" id="2H89">
    <property type="method" value="X-ray"/>
    <property type="resolution" value="2.40 A"/>
    <property type="chains" value="D=55-157"/>
</dbReference>
<dbReference type="PDB" id="2WQY">
    <property type="method" value="X-ray"/>
    <property type="resolution" value="2.10 A"/>
    <property type="chains" value="D/Q=55-157"/>
</dbReference>
<dbReference type="PDB" id="6MYO">
    <property type="method" value="X-ray"/>
    <property type="resolution" value="2.20 A"/>
    <property type="chains" value="D=55-157"/>
</dbReference>
<dbReference type="PDB" id="6MYP">
    <property type="method" value="X-ray"/>
    <property type="resolution" value="2.10 A"/>
    <property type="chains" value="D=55-157"/>
</dbReference>
<dbReference type="PDB" id="6MYQ">
    <property type="method" value="X-ray"/>
    <property type="resolution" value="1.97 A"/>
    <property type="chains" value="D=55-157"/>
</dbReference>
<dbReference type="PDB" id="6MYR">
    <property type="method" value="X-ray"/>
    <property type="resolution" value="2.15 A"/>
    <property type="chains" value="D=55-157"/>
</dbReference>
<dbReference type="PDB" id="6MYS">
    <property type="method" value="X-ray"/>
    <property type="resolution" value="2.37 A"/>
    <property type="chains" value="D=55-157"/>
</dbReference>
<dbReference type="PDB" id="6MYT">
    <property type="method" value="X-ray"/>
    <property type="resolution" value="2.27 A"/>
    <property type="chains" value="D=55-157"/>
</dbReference>
<dbReference type="PDB" id="6MYU">
    <property type="method" value="X-ray"/>
    <property type="resolution" value="1.97 A"/>
    <property type="chains" value="D=55-157"/>
</dbReference>
<dbReference type="PDBsum" id="1YQ3"/>
<dbReference type="PDBsum" id="1YQ4"/>
<dbReference type="PDBsum" id="2FBW"/>
<dbReference type="PDBsum" id="2H88"/>
<dbReference type="PDBsum" id="2H89"/>
<dbReference type="PDBsum" id="2WQY"/>
<dbReference type="PDBsum" id="6MYO"/>
<dbReference type="PDBsum" id="6MYP"/>
<dbReference type="PDBsum" id="6MYQ"/>
<dbReference type="PDBsum" id="6MYR"/>
<dbReference type="PDBsum" id="6MYS"/>
<dbReference type="PDBsum" id="6MYT"/>
<dbReference type="PDBsum" id="6MYU"/>
<dbReference type="SMR" id="Q5ZIS0"/>
<dbReference type="FunCoup" id="Q5ZIS0">
    <property type="interactions" value="1562"/>
</dbReference>
<dbReference type="STRING" id="9031.ENSGALP00000012780"/>
<dbReference type="PaxDb" id="9031-ENSGALP00000012780"/>
<dbReference type="Ensembl" id="ENSGALT00010061272.1">
    <property type="protein sequence ID" value="ENSGALP00010037890.1"/>
    <property type="gene ID" value="ENSGALG00010025113.1"/>
</dbReference>
<dbReference type="GeneID" id="419793"/>
<dbReference type="KEGG" id="gga:419793"/>
<dbReference type="CTD" id="6392"/>
<dbReference type="VEuPathDB" id="HostDB:geneid_419793"/>
<dbReference type="eggNOG" id="KOG4097">
    <property type="taxonomic scope" value="Eukaryota"/>
</dbReference>
<dbReference type="GeneTree" id="ENSGT00390000010003"/>
<dbReference type="InParanoid" id="Q5ZIS0"/>
<dbReference type="OMA" id="VMHQHWG"/>
<dbReference type="OrthoDB" id="18577at2759"/>
<dbReference type="PhylomeDB" id="Q5ZIS0"/>
<dbReference type="UniPathway" id="UPA00223"/>
<dbReference type="EvolutionaryTrace" id="Q5ZIS0"/>
<dbReference type="PRO" id="PR:Q5ZIS0"/>
<dbReference type="Proteomes" id="UP000000539">
    <property type="component" value="Chromosome 24"/>
</dbReference>
<dbReference type="GO" id="GO:0005743">
    <property type="term" value="C:mitochondrial inner membrane"/>
    <property type="evidence" value="ECO:0000250"/>
    <property type="project" value="UniProtKB"/>
</dbReference>
<dbReference type="GO" id="GO:0045273">
    <property type="term" value="C:respiratory chain complex II (succinate dehydrogenase)"/>
    <property type="evidence" value="ECO:0000250"/>
    <property type="project" value="UniProtKB"/>
</dbReference>
<dbReference type="GO" id="GO:0020037">
    <property type="term" value="F:heme binding"/>
    <property type="evidence" value="ECO:0000250"/>
    <property type="project" value="UniProtKB"/>
</dbReference>
<dbReference type="GO" id="GO:0046872">
    <property type="term" value="F:metal ion binding"/>
    <property type="evidence" value="ECO:0007669"/>
    <property type="project" value="UniProtKB-KW"/>
</dbReference>
<dbReference type="GO" id="GO:0048039">
    <property type="term" value="F:ubiquinone binding"/>
    <property type="evidence" value="ECO:0000250"/>
    <property type="project" value="UniProtKB"/>
</dbReference>
<dbReference type="GO" id="GO:0006121">
    <property type="term" value="P:mitochondrial electron transport, succinate to ubiquinone"/>
    <property type="evidence" value="ECO:0000318"/>
    <property type="project" value="GO_Central"/>
</dbReference>
<dbReference type="GO" id="GO:0006099">
    <property type="term" value="P:tricarboxylic acid cycle"/>
    <property type="evidence" value="ECO:0000318"/>
    <property type="project" value="GO_Central"/>
</dbReference>
<dbReference type="CDD" id="cd03496">
    <property type="entry name" value="SQR_TypeC_CybS"/>
    <property type="match status" value="1"/>
</dbReference>
<dbReference type="FunFam" id="1.20.1300.10:FF:000009">
    <property type="entry name" value="Succinate dehydrogenase [ubiquinone] cytochrome b small subunit, mitochondrial"/>
    <property type="match status" value="1"/>
</dbReference>
<dbReference type="Gene3D" id="1.20.1300.10">
    <property type="entry name" value="Fumarate reductase/succinate dehydrogenase, transmembrane subunit"/>
    <property type="match status" value="1"/>
</dbReference>
<dbReference type="InterPro" id="IPR007992">
    <property type="entry name" value="CybS"/>
</dbReference>
<dbReference type="InterPro" id="IPR034804">
    <property type="entry name" value="SQR/QFR_C/D"/>
</dbReference>
<dbReference type="PANTHER" id="PTHR13337">
    <property type="entry name" value="SUCCINATE DEHYDROGENASE"/>
    <property type="match status" value="1"/>
</dbReference>
<dbReference type="PANTHER" id="PTHR13337:SF2">
    <property type="entry name" value="SUCCINATE DEHYDROGENASE [UBIQUINONE] CYTOCHROME B SMALL SUBUNIT, MITOCHONDRIAL"/>
    <property type="match status" value="1"/>
</dbReference>
<dbReference type="Pfam" id="PF05328">
    <property type="entry name" value="CybS"/>
    <property type="match status" value="1"/>
</dbReference>
<dbReference type="SUPFAM" id="SSF81343">
    <property type="entry name" value="Fumarate reductase respiratory complex transmembrane subunits"/>
    <property type="match status" value="1"/>
</dbReference>
<name>DHSD_CHICK</name>
<comment type="function">
    <text evidence="1 4">Membrane-anchoring subunit of succinate dehydrogenase (SDH) that is involved in complex II of the mitochondrial electron transport chain and is responsible for transferring electrons from succinate to ubiquinone (coenzyme Q) (PubMed:16371358). SDH also oxidizes malate to the non-canonical enol form of oxaloacetate, enol-oxaloacetate (By similarity). Enol-oxaloacetate, which is a potent inhibitor of the succinate dehydrogenase activity, is further isomerized into keto-oxaloacetate (By similarity).</text>
</comment>
<comment type="pathway">
    <text evidence="4">Carbohydrate metabolism; tricarboxylic acid cycle.</text>
</comment>
<comment type="subunit">
    <text evidence="3 4 5">Component of complex II composed of four subunits: the flavoprotein (FP) SDHA, iron-sulfur protein (IP) SDHB, and a cytochrome b560 composed of SDHC and SDHD.</text>
</comment>
<comment type="subcellular location">
    <subcellularLocation>
        <location evidence="3 4 5">Mitochondrion inner membrane</location>
        <topology evidence="3 4 5">Multi-pass membrane protein</topology>
    </subcellularLocation>
</comment>
<comment type="similarity">
    <text evidence="6">Belongs to the CybS family.</text>
</comment>
<reference key="1">
    <citation type="journal article" date="2005" name="Genome Biol.">
        <title>Full-length cDNAs from chicken bursal lymphocytes to facilitate gene function analysis.</title>
        <authorList>
            <person name="Caldwell R.B."/>
            <person name="Kierzek A.M."/>
            <person name="Arakawa H."/>
            <person name="Bezzubov Y."/>
            <person name="Zaim J."/>
            <person name="Fiedler P."/>
            <person name="Kutter S."/>
            <person name="Blagodatski A."/>
            <person name="Kostovska D."/>
            <person name="Koter M."/>
            <person name="Plachy J."/>
            <person name="Carninci P."/>
            <person name="Hayashizaki Y."/>
            <person name="Buerstedde J.-M."/>
        </authorList>
    </citation>
    <scope>NUCLEOTIDE SEQUENCE [LARGE SCALE MRNA]</scope>
    <source>
        <strain>CB</strain>
        <tissue>Bursa of Fabricius</tissue>
    </source>
</reference>
<reference key="2">
    <citation type="journal article" date="2005" name="Acta Crystallogr. D">
        <title>Crystallization of mitochondrial respiratory complex II from chicken heart: a membrane-protein complex diffracting to 2.0 A.</title>
        <authorList>
            <person name="Huang L.-S."/>
            <person name="Borders T.M."/>
            <person name="Shen J.T."/>
            <person name="Wang C.-J."/>
            <person name="Berry E.A."/>
        </authorList>
    </citation>
    <scope>X-RAY CRYSTALLOGRAPHY (2.0 ANGSTROMS) OF 55-157</scope>
    <scope>SUBUNIT</scope>
    <scope>SUBCELLULAR LOCATION</scope>
</reference>
<reference evidence="12 13" key="3">
    <citation type="journal article" date="2006" name="Biochim. Biophys. Acta">
        <title>Crystallographic studies of the binding of ligands to the dicarboxylate site of complex II, and the identity of the ligand in the 'oxaloacetate-inhibited' state.</title>
        <authorList>
            <person name="Huang L.-S."/>
            <person name="Shen J.T."/>
            <person name="Wang A.C."/>
            <person name="Berry E.A."/>
        </authorList>
    </citation>
    <scope>X-RAY CRYSTALLOGRAPHY (1.74 ANGSTROMS) OF 55-157 IN COMPLEXES WITH UBIQUINONE AND HEME</scope>
    <scope>SUBUNIT</scope>
    <scope>SUBCELLULAR LOCATION</scope>
</reference>
<reference evidence="9 10 11" key="4">
    <citation type="journal article" date="2006" name="J. Biol. Chem.">
        <title>3-nitropropionic acid is a suicide inhibitor of mitochondrial respiration that, upon oxidation by complex II, forms a covalent adduct with a catalytic base arginine in the active site of the enzyme.</title>
        <authorList>
            <person name="Huang L.-S."/>
            <person name="Sun G."/>
            <person name="Cobessi D."/>
            <person name="Wang A.C."/>
            <person name="Shen J.T."/>
            <person name="Tung E.Y."/>
            <person name="Anderson V.E."/>
            <person name="Berry E.A."/>
        </authorList>
    </citation>
    <scope>X-RAY CRYSTALLOGRAPHY (2.2 ANGSTROMS) OF 55-157 IN COMPLEXES WITH UBIQUINONE AND HEME</scope>
    <scope>FUNCTION</scope>
    <scope>PATHWAY</scope>
    <scope>SUBUNIT</scope>
    <scope>SUBCELLULAR LOCATION</scope>
</reference>
<organism>
    <name type="scientific">Gallus gallus</name>
    <name type="common">Chicken</name>
    <dbReference type="NCBI Taxonomy" id="9031"/>
    <lineage>
        <taxon>Eukaryota</taxon>
        <taxon>Metazoa</taxon>
        <taxon>Chordata</taxon>
        <taxon>Craniata</taxon>
        <taxon>Vertebrata</taxon>
        <taxon>Euteleostomi</taxon>
        <taxon>Archelosauria</taxon>
        <taxon>Archosauria</taxon>
        <taxon>Dinosauria</taxon>
        <taxon>Saurischia</taxon>
        <taxon>Theropoda</taxon>
        <taxon>Coelurosauria</taxon>
        <taxon>Aves</taxon>
        <taxon>Neognathae</taxon>
        <taxon>Galloanserae</taxon>
        <taxon>Galliformes</taxon>
        <taxon>Phasianidae</taxon>
        <taxon>Phasianinae</taxon>
        <taxon>Gallus</taxon>
    </lineage>
</organism>
<keyword id="KW-0002">3D-structure</keyword>
<keyword id="KW-0249">Electron transport</keyword>
<keyword id="KW-0349">Heme</keyword>
<keyword id="KW-0408">Iron</keyword>
<keyword id="KW-0472">Membrane</keyword>
<keyword id="KW-0479">Metal-binding</keyword>
<keyword id="KW-0496">Mitochondrion</keyword>
<keyword id="KW-0999">Mitochondrion inner membrane</keyword>
<keyword id="KW-1185">Reference proteome</keyword>
<keyword id="KW-0809">Transit peptide</keyword>
<keyword id="KW-0812">Transmembrane</keyword>
<keyword id="KW-1133">Transmembrane helix</keyword>
<keyword id="KW-0813">Transport</keyword>
<keyword id="KW-0816">Tricarboxylic acid cycle</keyword>
<feature type="transit peptide" description="Mitochondrion" evidence="2">
    <location>
        <begin position="1"/>
        <end position="45"/>
    </location>
</feature>
<feature type="chain" id="PRO_0000343805" description="Succinate dehydrogenase [ubiquinone] cytochrome b small subunit, mitochondrial">
    <location>
        <begin position="46"/>
        <end position="157"/>
    </location>
</feature>
<feature type="topological domain" description="Mitochondrial matrix" evidence="7 8">
    <location>
        <begin position="46"/>
        <end position="61"/>
    </location>
</feature>
<feature type="transmembrane region" description="Helical" evidence="7 8">
    <location>
        <begin position="62"/>
        <end position="83"/>
    </location>
</feature>
<feature type="topological domain" description="Mitochondrial intermembrane" evidence="7 8">
    <location>
        <begin position="84"/>
        <end position="88"/>
    </location>
</feature>
<feature type="transmembrane region" description="Helical" evidence="7 8">
    <location>
        <begin position="89"/>
        <end position="109"/>
    </location>
</feature>
<feature type="topological domain" description="Mitochondrial matrix" evidence="7 8">
    <location>
        <begin position="110"/>
        <end position="118"/>
    </location>
</feature>
<feature type="transmembrane region" description="Helical" evidence="7 8">
    <location>
        <begin position="119"/>
        <end position="140"/>
    </location>
</feature>
<feature type="topological domain" description="Mitochondrial intermembrane" evidence="7 8">
    <location>
        <begin position="141"/>
        <end position="157"/>
    </location>
</feature>
<feature type="binding site" description="axial binding residue" evidence="4 5 9 10 11 12 13">
    <location>
        <position position="100"/>
    </location>
    <ligand>
        <name>heme b</name>
        <dbReference type="ChEBI" id="CHEBI:60344"/>
        <note>ligand shared with SDHC</note>
    </ligand>
    <ligandPart>
        <name>Fe</name>
        <dbReference type="ChEBI" id="CHEBI:18248"/>
    </ligandPart>
</feature>
<feature type="binding site" evidence="4 5">
    <location>
        <position position="112"/>
    </location>
    <ligand>
        <name>a ubiquinone</name>
        <dbReference type="ChEBI" id="CHEBI:16389"/>
        <note>ligand shared with IP/SDHB</note>
    </ligand>
</feature>
<feature type="helix" evidence="14">
    <location>
        <begin position="59"/>
        <end position="83"/>
    </location>
</feature>
<feature type="helix" evidence="14">
    <location>
        <begin position="87"/>
        <end position="112"/>
    </location>
</feature>
<feature type="helix" evidence="14">
    <location>
        <begin position="116"/>
        <end position="143"/>
    </location>
</feature>
<feature type="helix" evidence="14">
    <location>
        <begin position="147"/>
        <end position="155"/>
    </location>
</feature>
<protein>
    <recommendedName>
        <fullName>Succinate dehydrogenase [ubiquinone] cytochrome b small subunit, mitochondrial</fullName>
        <shortName>CybS</shortName>
    </recommendedName>
    <alternativeName>
        <fullName>Malate dehydrogenase [quinone] cytochrome b small subunit</fullName>
    </alternativeName>
    <alternativeName>
        <fullName>Succinate dehydrogenase complex subunit D</fullName>
    </alternativeName>
    <alternativeName>
        <fullName>Succinate-ubiquinone oxidoreductase cytochrome b small subunit</fullName>
    </alternativeName>
    <alternativeName>
        <fullName>Succinate-ubiquinone reductase membrane anchor subunit</fullName>
    </alternativeName>
</protein>
<sequence length="157" mass="16435">MAALVLLRAGLARPRGVPTALLRGTLLRHSAVLTAAADRSAPARQSHGGAPQGHGSSKAASLHWTSERAVSALLLGLLPAAYLYPGPAVDYSLAAALTLHGHWGLGQVITDYVHGDTPIKVANTGLYVLSAITFTGLCYFNYYDVGICKAVAMLWSI</sequence>
<accession>Q5ZIS0</accession>
<evidence type="ECO:0000250" key="1">
    <source>
        <dbReference type="UniProtKB" id="Q95123"/>
    </source>
</evidence>
<evidence type="ECO:0000255" key="2"/>
<evidence type="ECO:0000269" key="3">
    <source>
    </source>
</evidence>
<evidence type="ECO:0000269" key="4">
    <source>
    </source>
</evidence>
<evidence type="ECO:0000269" key="5">
    <source>
    </source>
</evidence>
<evidence type="ECO:0000305" key="6"/>
<evidence type="ECO:0000305" key="7">
    <source>
    </source>
</evidence>
<evidence type="ECO:0000305" key="8">
    <source>
    </source>
</evidence>
<evidence type="ECO:0007744" key="9">
    <source>
        <dbReference type="PDB" id="1YQ3"/>
    </source>
</evidence>
<evidence type="ECO:0007744" key="10">
    <source>
        <dbReference type="PDB" id="1YQ4"/>
    </source>
</evidence>
<evidence type="ECO:0007744" key="11">
    <source>
        <dbReference type="PDB" id="2FBW"/>
    </source>
</evidence>
<evidence type="ECO:0007744" key="12">
    <source>
        <dbReference type="PDB" id="2H88"/>
    </source>
</evidence>
<evidence type="ECO:0007744" key="13">
    <source>
        <dbReference type="PDB" id="2H89"/>
    </source>
</evidence>
<evidence type="ECO:0007829" key="14">
    <source>
        <dbReference type="PDB" id="2H88"/>
    </source>
</evidence>
<proteinExistence type="evidence at protein level"/>